<evidence type="ECO:0000255" key="1">
    <source>
        <dbReference type="PROSITE-ProRule" id="PRU00173"/>
    </source>
</evidence>
<evidence type="ECO:0000255" key="2">
    <source>
        <dbReference type="PROSITE-ProRule" id="PRU00340"/>
    </source>
</evidence>
<evidence type="ECO:0000269" key="3">
    <source>
    </source>
</evidence>
<evidence type="ECO:0000305" key="4"/>
<evidence type="ECO:0000312" key="5">
    <source>
        <dbReference type="EMBL" id="CCP43054.1"/>
    </source>
</evidence>
<proteinExistence type="evidence at protein level"/>
<organism>
    <name type="scientific">Mycobacterium tuberculosis (strain ATCC 25618 / H37Rv)</name>
    <dbReference type="NCBI Taxonomy" id="83332"/>
    <lineage>
        <taxon>Bacteria</taxon>
        <taxon>Bacillati</taxon>
        <taxon>Actinomycetota</taxon>
        <taxon>Actinomycetes</taxon>
        <taxon>Mycobacteriales</taxon>
        <taxon>Mycobacteriaceae</taxon>
        <taxon>Mycobacterium</taxon>
        <taxon>Mycobacterium tuberculosis complex</taxon>
    </lineage>
</organism>
<keyword id="KW-0046">Antibiotic resistance</keyword>
<keyword id="KW-0238">DNA-binding</keyword>
<keyword id="KW-1185">Reference proteome</keyword>
<keyword id="KW-0804">Transcription</keyword>
<keyword id="KW-0805">Transcription regulation</keyword>
<feature type="chain" id="PRO_0000458267" description="HTH-type transcriptional regulator Rv0324">
    <location>
        <begin position="1"/>
        <end position="226"/>
    </location>
</feature>
<feature type="domain" description="HTH arsR-type" evidence="2">
    <location>
        <begin position="7"/>
        <end position="101"/>
    </location>
</feature>
<feature type="domain" description="Rhodanese" evidence="1">
    <location>
        <begin position="129"/>
        <end position="218"/>
    </location>
</feature>
<feature type="DNA-binding region" description="H-T-H motif" evidence="2">
    <location>
        <begin position="41"/>
        <end position="64"/>
    </location>
</feature>
<feature type="active site" description="Cysteine persulfide intermediate" evidence="1">
    <location>
        <position position="177"/>
    </location>
</feature>
<sequence length="226" mass="24121">MAGQSDRKAALLDQVARVGKALANGRRLQILDLLAQGERAVEAIATATGMNLTTASANLQALKSGGLVEARREGTRQYYRIAGEDVARLFALVQVVADEHLADVAVAAADVLGSPEDAITRAELLRRREAGEVTLVDVRPHEEYQAGHIPGAINIPIAELADRLAELTGDRDIVAYCRGAYCVMAPDAVRIARDAGREVKRLDDGMLEWRLAGLPVDEGAPVGHGD</sequence>
<name>Y324_MYCTU</name>
<gene>
    <name evidence="5" type="ordered locus">Rv0324</name>
</gene>
<dbReference type="EMBL" id="AL123456">
    <property type="protein sequence ID" value="CCP43054.1"/>
    <property type="molecule type" value="Genomic_DNA"/>
</dbReference>
<dbReference type="RefSeq" id="NP_214838.1">
    <property type="nucleotide sequence ID" value="NC_000962.3"/>
</dbReference>
<dbReference type="RefSeq" id="WP_003906339.1">
    <property type="nucleotide sequence ID" value="NZ_NVQJ01000026.1"/>
</dbReference>
<dbReference type="SMR" id="O08446"/>
<dbReference type="FunCoup" id="O08446">
    <property type="interactions" value="1"/>
</dbReference>
<dbReference type="STRING" id="83332.Rv0324"/>
<dbReference type="PaxDb" id="83332-Rv0324"/>
<dbReference type="DNASU" id="886548"/>
<dbReference type="GeneID" id="886548"/>
<dbReference type="KEGG" id="mtu:Rv0324"/>
<dbReference type="KEGG" id="mtv:RVBD_0324"/>
<dbReference type="PATRIC" id="fig|83332.111.peg.360"/>
<dbReference type="TubercuList" id="Rv0324"/>
<dbReference type="eggNOG" id="COG0607">
    <property type="taxonomic scope" value="Bacteria"/>
</dbReference>
<dbReference type="eggNOG" id="COG0640">
    <property type="taxonomic scope" value="Bacteria"/>
</dbReference>
<dbReference type="InParanoid" id="O08446"/>
<dbReference type="OrthoDB" id="9800872at2"/>
<dbReference type="PhylomeDB" id="O08446"/>
<dbReference type="Proteomes" id="UP000001584">
    <property type="component" value="Chromosome"/>
</dbReference>
<dbReference type="GO" id="GO:0003677">
    <property type="term" value="F:DNA binding"/>
    <property type="evidence" value="ECO:0007669"/>
    <property type="project" value="UniProtKB-KW"/>
</dbReference>
<dbReference type="GO" id="GO:0003700">
    <property type="term" value="F:DNA-binding transcription factor activity"/>
    <property type="evidence" value="ECO:0007669"/>
    <property type="project" value="InterPro"/>
</dbReference>
<dbReference type="GO" id="GO:0004792">
    <property type="term" value="F:thiosulfate-cyanide sulfurtransferase activity"/>
    <property type="evidence" value="ECO:0007669"/>
    <property type="project" value="UniProtKB-EC"/>
</dbReference>
<dbReference type="GO" id="GO:0006355">
    <property type="term" value="P:regulation of DNA-templated transcription"/>
    <property type="evidence" value="ECO:0000318"/>
    <property type="project" value="GO_Central"/>
</dbReference>
<dbReference type="GO" id="GO:0046677">
    <property type="term" value="P:response to antibiotic"/>
    <property type="evidence" value="ECO:0007669"/>
    <property type="project" value="UniProtKB-KW"/>
</dbReference>
<dbReference type="CDD" id="cd00090">
    <property type="entry name" value="HTH_ARSR"/>
    <property type="match status" value="1"/>
</dbReference>
<dbReference type="CDD" id="cd00158">
    <property type="entry name" value="RHOD"/>
    <property type="match status" value="1"/>
</dbReference>
<dbReference type="FunFam" id="3.40.250.10:FF:000039">
    <property type="entry name" value="ArsR family transcriptional regulator"/>
    <property type="match status" value="1"/>
</dbReference>
<dbReference type="Gene3D" id="3.40.250.10">
    <property type="entry name" value="Rhodanese-like domain"/>
    <property type="match status" value="1"/>
</dbReference>
<dbReference type="Gene3D" id="1.10.10.10">
    <property type="entry name" value="Winged helix-like DNA-binding domain superfamily/Winged helix DNA-binding domain"/>
    <property type="match status" value="1"/>
</dbReference>
<dbReference type="InterPro" id="IPR011991">
    <property type="entry name" value="ArsR-like_HTH"/>
</dbReference>
<dbReference type="InterPro" id="IPR001845">
    <property type="entry name" value="HTH_ArsR_DNA-bd_dom"/>
</dbReference>
<dbReference type="InterPro" id="IPR051081">
    <property type="entry name" value="HTH_MetalResp_TranReg"/>
</dbReference>
<dbReference type="InterPro" id="IPR001763">
    <property type="entry name" value="Rhodanese-like_dom"/>
</dbReference>
<dbReference type="InterPro" id="IPR036873">
    <property type="entry name" value="Rhodanese-like_dom_sf"/>
</dbReference>
<dbReference type="InterPro" id="IPR001307">
    <property type="entry name" value="Thiosulphate_STrfase_CS"/>
</dbReference>
<dbReference type="InterPro" id="IPR036388">
    <property type="entry name" value="WH-like_DNA-bd_sf"/>
</dbReference>
<dbReference type="InterPro" id="IPR036390">
    <property type="entry name" value="WH_DNA-bd_sf"/>
</dbReference>
<dbReference type="NCBIfam" id="NF033788">
    <property type="entry name" value="HTH_metalloreg"/>
    <property type="match status" value="1"/>
</dbReference>
<dbReference type="PANTHER" id="PTHR33154:SF18">
    <property type="entry name" value="ARSENICAL RESISTANCE OPERON REPRESSOR"/>
    <property type="match status" value="1"/>
</dbReference>
<dbReference type="PANTHER" id="PTHR33154">
    <property type="entry name" value="TRANSCRIPTIONAL REGULATOR, ARSR FAMILY"/>
    <property type="match status" value="1"/>
</dbReference>
<dbReference type="Pfam" id="PF01022">
    <property type="entry name" value="HTH_5"/>
    <property type="match status" value="1"/>
</dbReference>
<dbReference type="Pfam" id="PF00581">
    <property type="entry name" value="Rhodanese"/>
    <property type="match status" value="1"/>
</dbReference>
<dbReference type="PRINTS" id="PR00778">
    <property type="entry name" value="HTHARSR"/>
</dbReference>
<dbReference type="SMART" id="SM00418">
    <property type="entry name" value="HTH_ARSR"/>
    <property type="match status" value="1"/>
</dbReference>
<dbReference type="SMART" id="SM00450">
    <property type="entry name" value="RHOD"/>
    <property type="match status" value="1"/>
</dbReference>
<dbReference type="SUPFAM" id="SSF52821">
    <property type="entry name" value="Rhodanese/Cell cycle control phosphatase"/>
    <property type="match status" value="1"/>
</dbReference>
<dbReference type="SUPFAM" id="SSF46785">
    <property type="entry name" value="Winged helix' DNA-binding domain"/>
    <property type="match status" value="1"/>
</dbReference>
<dbReference type="PROSITE" id="PS50987">
    <property type="entry name" value="HTH_ARSR_2"/>
    <property type="match status" value="1"/>
</dbReference>
<dbReference type="PROSITE" id="PS00380">
    <property type="entry name" value="RHODANESE_1"/>
    <property type="match status" value="1"/>
</dbReference>
<dbReference type="PROSITE" id="PS50206">
    <property type="entry name" value="RHODANESE_3"/>
    <property type="match status" value="1"/>
</dbReference>
<comment type="function">
    <text evidence="3">Part of a regulatory network that coordinates tolerance to the antitubercular drug bedaquiline.</text>
</comment>
<comment type="domain">
    <text evidence="4">Contains an N-terminal HTH arsR-type DNA-binding domain and a C-terminal rhodanese-like domain.</text>
</comment>
<comment type="disruption phenotype">
    <text evidence="3">Knockout mutant is hypersensitive to bedaquiline (PubMed:27573104). Deletion of the gene does not affect sensitivity to capreomycin, pretomanid and rifampicin (PubMed:27573104).</text>
</comment>
<reference key="1">
    <citation type="journal article" date="1998" name="Nature">
        <title>Deciphering the biology of Mycobacterium tuberculosis from the complete genome sequence.</title>
        <authorList>
            <person name="Cole S.T."/>
            <person name="Brosch R."/>
            <person name="Parkhill J."/>
            <person name="Garnier T."/>
            <person name="Churcher C.M."/>
            <person name="Harris D.E."/>
            <person name="Gordon S.V."/>
            <person name="Eiglmeier K."/>
            <person name="Gas S."/>
            <person name="Barry C.E. III"/>
            <person name="Tekaia F."/>
            <person name="Badcock K."/>
            <person name="Basham D."/>
            <person name="Brown D."/>
            <person name="Chillingworth T."/>
            <person name="Connor R."/>
            <person name="Davies R.M."/>
            <person name="Devlin K."/>
            <person name="Feltwell T."/>
            <person name="Gentles S."/>
            <person name="Hamlin N."/>
            <person name="Holroyd S."/>
            <person name="Hornsby T."/>
            <person name="Jagels K."/>
            <person name="Krogh A."/>
            <person name="McLean J."/>
            <person name="Moule S."/>
            <person name="Murphy L.D."/>
            <person name="Oliver S."/>
            <person name="Osborne J."/>
            <person name="Quail M.A."/>
            <person name="Rajandream M.A."/>
            <person name="Rogers J."/>
            <person name="Rutter S."/>
            <person name="Seeger K."/>
            <person name="Skelton S."/>
            <person name="Squares S."/>
            <person name="Squares R."/>
            <person name="Sulston J.E."/>
            <person name="Taylor K."/>
            <person name="Whitehead S."/>
            <person name="Barrell B.G."/>
        </authorList>
    </citation>
    <scope>NUCLEOTIDE SEQUENCE [LARGE SCALE GENOMIC DNA]</scope>
    <source>
        <strain>ATCC 25618 / H37Rv</strain>
    </source>
</reference>
<reference key="2">
    <citation type="journal article" date="2011" name="Mol. Cell. Proteomics">
        <title>Proteogenomic analysis of Mycobacterium tuberculosis by high resolution mass spectrometry.</title>
        <authorList>
            <person name="Kelkar D.S."/>
            <person name="Kumar D."/>
            <person name="Kumar P."/>
            <person name="Balakrishnan L."/>
            <person name="Muthusamy B."/>
            <person name="Yadav A.K."/>
            <person name="Shrivastava P."/>
            <person name="Marimuthu A."/>
            <person name="Anand S."/>
            <person name="Sundaram H."/>
            <person name="Kingsbury R."/>
            <person name="Harsha H.C."/>
            <person name="Nair B."/>
            <person name="Prasad T.S."/>
            <person name="Chauhan D.S."/>
            <person name="Katoch K."/>
            <person name="Katoch V.M."/>
            <person name="Kumar P."/>
            <person name="Chaerkady R."/>
            <person name="Ramachandran S."/>
            <person name="Dash D."/>
            <person name="Pandey A."/>
        </authorList>
    </citation>
    <scope>IDENTIFICATION BY MASS SPECTROMETRY [LARGE SCALE ANALYSIS]</scope>
    <source>
        <strain>ATCC 25618 / H37Rv</strain>
    </source>
</reference>
<reference key="3">
    <citation type="journal article" date="2016" name="Nat. Microbiol.">
        <title>Network analysis identifies Rv0324 and Rv0880 as regulators of bedaquiline tolerance in Mycobacterium tuberculosis.</title>
        <authorList>
            <person name="Peterson E.J.R."/>
            <person name="Ma S."/>
            <person name="Sherman D.R."/>
            <person name="Baliga N.S."/>
        </authorList>
    </citation>
    <scope>FUNCTION</scope>
    <scope>DISRUPTION PHENOTYPE</scope>
    <source>
        <strain>H37Rv</strain>
    </source>
</reference>
<accession>O08446</accession>
<accession>F2GN14</accession>
<accession>I6X8Z8</accession>
<accession>L0T514</accession>
<protein>
    <recommendedName>
        <fullName evidence="4">HTH-type transcriptional regulator Rv0324</fullName>
    </recommendedName>
</protein>